<organism>
    <name type="scientific">Bombus lapidarius</name>
    <name type="common">Red-tailed bumblebee</name>
    <name type="synonym">Apis lapidaria</name>
    <dbReference type="NCBI Taxonomy" id="30192"/>
    <lineage>
        <taxon>Eukaryota</taxon>
        <taxon>Metazoa</taxon>
        <taxon>Ecdysozoa</taxon>
        <taxon>Arthropoda</taxon>
        <taxon>Hexapoda</taxon>
        <taxon>Insecta</taxon>
        <taxon>Pterygota</taxon>
        <taxon>Neoptera</taxon>
        <taxon>Endopterygota</taxon>
        <taxon>Hymenoptera</taxon>
        <taxon>Apocrita</taxon>
        <taxon>Aculeata</taxon>
        <taxon>Apoidea</taxon>
        <taxon>Anthophila</taxon>
        <taxon>Apidae</taxon>
        <taxon>Bombus</taxon>
        <taxon>Melanobombus</taxon>
    </lineage>
</organism>
<sequence>LKLKSILGKLGVILSHLNK</sequence>
<proteinExistence type="evidence at protein level"/>
<reference key="1">
    <citation type="journal article" date="2006" name="Toxicon">
        <title>Mass spectrometry strategies for venom mapping and peptide sequencing from crude venoms: case applications with single arthropod specimen.</title>
        <authorList>
            <person name="Favreau P."/>
            <person name="Menin L."/>
            <person name="Michalet S."/>
            <person name="Perret F."/>
            <person name="Cheneval O."/>
            <person name="Stocklin M."/>
            <person name="Bulet P."/>
            <person name="Stocklin R."/>
        </authorList>
    </citation>
    <scope>PROTEIN SEQUENCE</scope>
    <scope>SUBCELLULAR LOCATION</scope>
    <scope>MASS SPECTROMETRY</scope>
    <source>
        <tissue>Venom</tissue>
    </source>
</reference>
<evidence type="ECO:0000250" key="1">
    <source>
        <dbReference type="UniProtKB" id="P01514"/>
    </source>
</evidence>
<evidence type="ECO:0000250" key="2">
    <source>
        <dbReference type="UniProtKB" id="P07496"/>
    </source>
</evidence>
<evidence type="ECO:0000250" key="3">
    <source>
        <dbReference type="UniProtKB" id="P84914"/>
    </source>
</evidence>
<evidence type="ECO:0000269" key="4">
    <source>
    </source>
</evidence>
<evidence type="ECO:0000303" key="5">
    <source>
    </source>
</evidence>
<evidence type="ECO:0000305" key="6"/>
<evidence type="ECO:0000305" key="7">
    <source>
    </source>
</evidence>
<name>BOL8_BOMLA</name>
<protein>
    <recommendedName>
        <fullName evidence="5">Bombolitin-8</fullName>
    </recommendedName>
</protein>
<feature type="peptide" id="PRO_0000391363" description="Bombolitin-8">
    <location>
        <begin position="1"/>
        <end position="19"/>
    </location>
</feature>
<keyword id="KW-0044">Antibiotic</keyword>
<keyword id="KW-0929">Antimicrobial</keyword>
<keyword id="KW-0903">Direct protein sequencing</keyword>
<keyword id="KW-0295">Fungicide</keyword>
<keyword id="KW-1213">G-protein coupled receptor impairing toxin</keyword>
<keyword id="KW-0391">Immunity</keyword>
<keyword id="KW-0399">Innate immunity</keyword>
<keyword id="KW-0467">Mast cell degranulation</keyword>
<keyword id="KW-0964">Secreted</keyword>
<keyword id="KW-0800">Toxin</keyword>
<dbReference type="GO" id="GO:0005576">
    <property type="term" value="C:extracellular region"/>
    <property type="evidence" value="ECO:0007669"/>
    <property type="project" value="UniProtKB-SubCell"/>
</dbReference>
<dbReference type="GO" id="GO:0090729">
    <property type="term" value="F:toxin activity"/>
    <property type="evidence" value="ECO:0007669"/>
    <property type="project" value="UniProtKB-KW"/>
</dbReference>
<dbReference type="GO" id="GO:0042742">
    <property type="term" value="P:defense response to bacterium"/>
    <property type="evidence" value="ECO:0007669"/>
    <property type="project" value="UniProtKB-KW"/>
</dbReference>
<dbReference type="GO" id="GO:0050832">
    <property type="term" value="P:defense response to fungus"/>
    <property type="evidence" value="ECO:0007669"/>
    <property type="project" value="UniProtKB-KW"/>
</dbReference>
<dbReference type="GO" id="GO:0045087">
    <property type="term" value="P:innate immune response"/>
    <property type="evidence" value="ECO:0007669"/>
    <property type="project" value="UniProtKB-KW"/>
</dbReference>
<dbReference type="GO" id="GO:0031640">
    <property type="term" value="P:killing of cells of another organism"/>
    <property type="evidence" value="ECO:0007669"/>
    <property type="project" value="UniProtKB-KW"/>
</dbReference>
<accession>P0CD69</accession>
<comment type="function">
    <text evidence="1 2 3">Mast cell degranulating peptide. May also display antibacterial and antifungal activities (By similarity). Its mast cell degranulation activity may be related to the activation of G-protein coupled receptors in mast cells as well as interaction with other proteins located in cell endosomal membranes in the mast cells (By similarity).</text>
</comment>
<comment type="subcellular location">
    <subcellularLocation>
        <location evidence="4">Secreted</location>
    </subcellularLocation>
</comment>
<comment type="tissue specificity">
    <text evidence="7">Expressed by the venom gland.</text>
</comment>
<comment type="mass spectrometry"/>
<comment type="similarity">
    <text evidence="6">Belongs to the MCD family. Bombolitin subfamily.</text>
</comment>